<proteinExistence type="inferred from homology"/>
<reference key="1">
    <citation type="journal article" date="2011" name="Stand. Genomic Sci.">
        <title>Complete genome sequence of Rhodospirillum rubrum type strain (S1).</title>
        <authorList>
            <person name="Munk A.C."/>
            <person name="Copeland A."/>
            <person name="Lucas S."/>
            <person name="Lapidus A."/>
            <person name="Del Rio T.G."/>
            <person name="Barry K."/>
            <person name="Detter J.C."/>
            <person name="Hammon N."/>
            <person name="Israni S."/>
            <person name="Pitluck S."/>
            <person name="Brettin T."/>
            <person name="Bruce D."/>
            <person name="Han C."/>
            <person name="Tapia R."/>
            <person name="Gilna P."/>
            <person name="Schmutz J."/>
            <person name="Larimer F."/>
            <person name="Land M."/>
            <person name="Kyrpides N.C."/>
            <person name="Mavromatis K."/>
            <person name="Richardson P."/>
            <person name="Rohde M."/>
            <person name="Goeker M."/>
            <person name="Klenk H.P."/>
            <person name="Zhang Y."/>
            <person name="Roberts G.P."/>
            <person name="Reslewic S."/>
            <person name="Schwartz D.C."/>
        </authorList>
    </citation>
    <scope>NUCLEOTIDE SEQUENCE [LARGE SCALE GENOMIC DNA]</scope>
    <source>
        <strain>ATCC 11170 / ATH 1.1.1 / DSM 467 / LMG 4362 / NCIMB 8255 / S1</strain>
    </source>
</reference>
<sequence>MTIRLLPPVLVNRIAAGEVVERPASAVKELVENAIDAGASRIDITMTDGGRARILVVDDGRGMDPGELSLAVERHATSKLPGDDLLDIHTLGFRGEALPSIGSVARLTLTSRAAGAGDAWALTVEGGAKGEPEPASHPQGTRVEVRDLFYATPARLKFLKAPRTEQMHAVDVVHRLAMAHPAVGFTLSDGTRQQIRLSGAQGELFEARLTRLGAILGREFSDNAIAIEAEREGIRLTGHAALPTYNKATSAGQYLFVNGRPVRDKLLHGAVRGAYQDVLAHDRNAVLALYLDLPPEMVDVNVHPAKAEVRFRDPGLVRGLIIGALRHALAAAGHRASSTVSLAALGALRPAQGSGAPALPWGAGGYGGGASHPGLEERRSAYAAQAPAGTPDPWAGRGMGAGGGSGQAAMAWLAGAPPAAPRLAGEPEAPPTGAEDFPLGAARGQIHDTYIIAQTRDGVVIVDQHAAHERLVMERMKAALAERGEVARQILLLPEVVELDEPGAVRVATAAAELAKLGLVVEGFGPGAVVVREVPALLGDTDVKGLVADLAEGLAEWGTAQALEDRLGDVVATMACHGSVRAGRRLRIEEMNALLRDMERTPRAGQCNHGRPTYVELRLGDIERLFGRR</sequence>
<evidence type="ECO:0000255" key="1">
    <source>
        <dbReference type="HAMAP-Rule" id="MF_00149"/>
    </source>
</evidence>
<name>MUTL_RHORT</name>
<feature type="chain" id="PRO_1000010067" description="DNA mismatch repair protein MutL">
    <location>
        <begin position="1"/>
        <end position="629"/>
    </location>
</feature>
<dbReference type="EMBL" id="CP000230">
    <property type="protein sequence ID" value="ABC23743.1"/>
    <property type="molecule type" value="Genomic_DNA"/>
</dbReference>
<dbReference type="RefSeq" id="WP_011390696.1">
    <property type="nucleotide sequence ID" value="NC_007643.1"/>
</dbReference>
<dbReference type="RefSeq" id="YP_428030.1">
    <property type="nucleotide sequence ID" value="NC_007643.1"/>
</dbReference>
<dbReference type="SMR" id="Q2RQ52"/>
<dbReference type="STRING" id="269796.Rru_A2946"/>
<dbReference type="EnsemblBacteria" id="ABC23743">
    <property type="protein sequence ID" value="ABC23743"/>
    <property type="gene ID" value="Rru_A2946"/>
</dbReference>
<dbReference type="KEGG" id="rru:Rru_A2946"/>
<dbReference type="PATRIC" id="fig|269796.9.peg.3054"/>
<dbReference type="eggNOG" id="COG0323">
    <property type="taxonomic scope" value="Bacteria"/>
</dbReference>
<dbReference type="HOGENOM" id="CLU_004131_4_2_5"/>
<dbReference type="PhylomeDB" id="Q2RQ52"/>
<dbReference type="Proteomes" id="UP000001929">
    <property type="component" value="Chromosome"/>
</dbReference>
<dbReference type="GO" id="GO:0032300">
    <property type="term" value="C:mismatch repair complex"/>
    <property type="evidence" value="ECO:0007669"/>
    <property type="project" value="InterPro"/>
</dbReference>
<dbReference type="GO" id="GO:0005524">
    <property type="term" value="F:ATP binding"/>
    <property type="evidence" value="ECO:0007669"/>
    <property type="project" value="InterPro"/>
</dbReference>
<dbReference type="GO" id="GO:0016887">
    <property type="term" value="F:ATP hydrolysis activity"/>
    <property type="evidence" value="ECO:0007669"/>
    <property type="project" value="InterPro"/>
</dbReference>
<dbReference type="GO" id="GO:0140664">
    <property type="term" value="F:ATP-dependent DNA damage sensor activity"/>
    <property type="evidence" value="ECO:0007669"/>
    <property type="project" value="InterPro"/>
</dbReference>
<dbReference type="GO" id="GO:0030983">
    <property type="term" value="F:mismatched DNA binding"/>
    <property type="evidence" value="ECO:0007669"/>
    <property type="project" value="InterPro"/>
</dbReference>
<dbReference type="GO" id="GO:0006298">
    <property type="term" value="P:mismatch repair"/>
    <property type="evidence" value="ECO:0007669"/>
    <property type="project" value="UniProtKB-UniRule"/>
</dbReference>
<dbReference type="CDD" id="cd16926">
    <property type="entry name" value="HATPase_MutL-MLH-PMS-like"/>
    <property type="match status" value="1"/>
</dbReference>
<dbReference type="CDD" id="cd03482">
    <property type="entry name" value="MutL_Trans_MutL"/>
    <property type="match status" value="1"/>
</dbReference>
<dbReference type="FunFam" id="3.30.565.10:FF:000003">
    <property type="entry name" value="DNA mismatch repair endonuclease MutL"/>
    <property type="match status" value="1"/>
</dbReference>
<dbReference type="Gene3D" id="3.30.230.10">
    <property type="match status" value="1"/>
</dbReference>
<dbReference type="Gene3D" id="3.30.565.10">
    <property type="entry name" value="Histidine kinase-like ATPase, C-terminal domain"/>
    <property type="match status" value="1"/>
</dbReference>
<dbReference type="Gene3D" id="3.30.1540.20">
    <property type="entry name" value="MutL, C-terminal domain, dimerisation subdomain"/>
    <property type="match status" value="1"/>
</dbReference>
<dbReference type="Gene3D" id="3.30.1370.100">
    <property type="entry name" value="MutL, C-terminal domain, regulatory subdomain"/>
    <property type="match status" value="1"/>
</dbReference>
<dbReference type="HAMAP" id="MF_00149">
    <property type="entry name" value="DNA_mis_repair"/>
    <property type="match status" value="1"/>
</dbReference>
<dbReference type="InterPro" id="IPR014762">
    <property type="entry name" value="DNA_mismatch_repair_CS"/>
</dbReference>
<dbReference type="InterPro" id="IPR020667">
    <property type="entry name" value="DNA_mismatch_repair_MutL"/>
</dbReference>
<dbReference type="InterPro" id="IPR013507">
    <property type="entry name" value="DNA_mismatch_S5_2-like"/>
</dbReference>
<dbReference type="InterPro" id="IPR036890">
    <property type="entry name" value="HATPase_C_sf"/>
</dbReference>
<dbReference type="InterPro" id="IPR002099">
    <property type="entry name" value="MutL/Mlh/PMS"/>
</dbReference>
<dbReference type="InterPro" id="IPR038973">
    <property type="entry name" value="MutL/Mlh/Pms-like"/>
</dbReference>
<dbReference type="InterPro" id="IPR014790">
    <property type="entry name" value="MutL_C"/>
</dbReference>
<dbReference type="InterPro" id="IPR042120">
    <property type="entry name" value="MutL_C_dimsub"/>
</dbReference>
<dbReference type="InterPro" id="IPR042121">
    <property type="entry name" value="MutL_C_regsub"/>
</dbReference>
<dbReference type="InterPro" id="IPR037198">
    <property type="entry name" value="MutL_C_sf"/>
</dbReference>
<dbReference type="InterPro" id="IPR020568">
    <property type="entry name" value="Ribosomal_Su5_D2-typ_SF"/>
</dbReference>
<dbReference type="InterPro" id="IPR014721">
    <property type="entry name" value="Ribsml_uS5_D2-typ_fold_subgr"/>
</dbReference>
<dbReference type="NCBIfam" id="TIGR00585">
    <property type="entry name" value="mutl"/>
    <property type="match status" value="1"/>
</dbReference>
<dbReference type="NCBIfam" id="NF000953">
    <property type="entry name" value="PRK00095.2-4"/>
    <property type="match status" value="1"/>
</dbReference>
<dbReference type="PANTHER" id="PTHR10073">
    <property type="entry name" value="DNA MISMATCH REPAIR PROTEIN MLH, PMS, MUTL"/>
    <property type="match status" value="1"/>
</dbReference>
<dbReference type="PANTHER" id="PTHR10073:SF12">
    <property type="entry name" value="DNA MISMATCH REPAIR PROTEIN MLH1"/>
    <property type="match status" value="1"/>
</dbReference>
<dbReference type="Pfam" id="PF01119">
    <property type="entry name" value="DNA_mis_repair"/>
    <property type="match status" value="1"/>
</dbReference>
<dbReference type="Pfam" id="PF13589">
    <property type="entry name" value="HATPase_c_3"/>
    <property type="match status" value="1"/>
</dbReference>
<dbReference type="Pfam" id="PF08676">
    <property type="entry name" value="MutL_C"/>
    <property type="match status" value="1"/>
</dbReference>
<dbReference type="SMART" id="SM01340">
    <property type="entry name" value="DNA_mis_repair"/>
    <property type="match status" value="1"/>
</dbReference>
<dbReference type="SMART" id="SM00853">
    <property type="entry name" value="MutL_C"/>
    <property type="match status" value="1"/>
</dbReference>
<dbReference type="SUPFAM" id="SSF55874">
    <property type="entry name" value="ATPase domain of HSP90 chaperone/DNA topoisomerase II/histidine kinase"/>
    <property type="match status" value="1"/>
</dbReference>
<dbReference type="SUPFAM" id="SSF118116">
    <property type="entry name" value="DNA mismatch repair protein MutL"/>
    <property type="match status" value="1"/>
</dbReference>
<dbReference type="SUPFAM" id="SSF54211">
    <property type="entry name" value="Ribosomal protein S5 domain 2-like"/>
    <property type="match status" value="1"/>
</dbReference>
<dbReference type="PROSITE" id="PS00058">
    <property type="entry name" value="DNA_MISMATCH_REPAIR_1"/>
    <property type="match status" value="1"/>
</dbReference>
<accession>Q2RQ52</accession>
<protein>
    <recommendedName>
        <fullName evidence="1">DNA mismatch repair protein MutL</fullName>
    </recommendedName>
</protein>
<keyword id="KW-0227">DNA damage</keyword>
<keyword id="KW-0234">DNA repair</keyword>
<keyword id="KW-1185">Reference proteome</keyword>
<comment type="function">
    <text evidence="1">This protein is involved in the repair of mismatches in DNA. It is required for dam-dependent methyl-directed DNA mismatch repair. May act as a 'molecular matchmaker', a protein that promotes the formation of a stable complex between two or more DNA-binding proteins in an ATP-dependent manner without itself being part of a final effector complex.</text>
</comment>
<comment type="similarity">
    <text evidence="1">Belongs to the DNA mismatch repair MutL/HexB family.</text>
</comment>
<organism>
    <name type="scientific">Rhodospirillum rubrum (strain ATCC 11170 / ATH 1.1.1 / DSM 467 / LMG 4362 / NCIMB 8255 / S1)</name>
    <dbReference type="NCBI Taxonomy" id="269796"/>
    <lineage>
        <taxon>Bacteria</taxon>
        <taxon>Pseudomonadati</taxon>
        <taxon>Pseudomonadota</taxon>
        <taxon>Alphaproteobacteria</taxon>
        <taxon>Rhodospirillales</taxon>
        <taxon>Rhodospirillaceae</taxon>
        <taxon>Rhodospirillum</taxon>
    </lineage>
</organism>
<gene>
    <name evidence="1" type="primary">mutL</name>
    <name type="ordered locus">Rru_A2946</name>
</gene>